<comment type="subcellular location">
    <subcellularLocation>
        <location evidence="1">Cytoplasm</location>
    </subcellularLocation>
</comment>
<comment type="similarity">
    <text evidence="1">Belongs to the TACO1 family.</text>
</comment>
<sequence>MGRIFETRKATMMARWNKMAKVFTRISKDIAIAVKAGGPNPDSNSTLRRVLQNARAANMPKDKVDAAIKRASGQSATDYEIVLYEGYAPHGIALLVETATDNVVRTVANVRMHFNKHSGNLGTAGSVAFMFQRMGVFRLNPEGLDLDSLELELIDHGLQEMGEGVGEKGEKQIIIRSAFADFGQLQAAIEAKGLVPVSADSEYVALNPIELPEDKATEVLELVDALEQDDDVQRVFHNLA</sequence>
<proteinExistence type="inferred from homology"/>
<accession>Q1CWP8</accession>
<evidence type="ECO:0000255" key="1">
    <source>
        <dbReference type="HAMAP-Rule" id="MF_00693"/>
    </source>
</evidence>
<reference key="1">
    <citation type="journal article" date="2006" name="Proc. Natl. Acad. Sci. U.S.A.">
        <title>Evolution of sensory complexity recorded in a myxobacterial genome.</title>
        <authorList>
            <person name="Goldman B.S."/>
            <person name="Nierman W.C."/>
            <person name="Kaiser D."/>
            <person name="Slater S.C."/>
            <person name="Durkin A.S."/>
            <person name="Eisen J.A."/>
            <person name="Ronning C.M."/>
            <person name="Barbazuk W.B."/>
            <person name="Blanchard M."/>
            <person name="Field C."/>
            <person name="Halling C."/>
            <person name="Hinkle G."/>
            <person name="Iartchuk O."/>
            <person name="Kim H.S."/>
            <person name="Mackenzie C."/>
            <person name="Madupu R."/>
            <person name="Miller N."/>
            <person name="Shvartsbeyn A."/>
            <person name="Sullivan S.A."/>
            <person name="Vaudin M."/>
            <person name="Wiegand R."/>
            <person name="Kaplan H.B."/>
        </authorList>
    </citation>
    <scope>NUCLEOTIDE SEQUENCE [LARGE SCALE GENOMIC DNA]</scope>
    <source>
        <strain>DK1622</strain>
    </source>
</reference>
<gene>
    <name type="ordered locus">MXAN_7062</name>
</gene>
<dbReference type="EMBL" id="CP000113">
    <property type="protein sequence ID" value="ABF91727.1"/>
    <property type="molecule type" value="Genomic_DNA"/>
</dbReference>
<dbReference type="RefSeq" id="WP_011556981.1">
    <property type="nucleotide sequence ID" value="NC_008095.1"/>
</dbReference>
<dbReference type="SMR" id="Q1CWP8"/>
<dbReference type="STRING" id="246197.MXAN_7062"/>
<dbReference type="EnsemblBacteria" id="ABF91727">
    <property type="protein sequence ID" value="ABF91727"/>
    <property type="gene ID" value="MXAN_7062"/>
</dbReference>
<dbReference type="GeneID" id="41364237"/>
<dbReference type="KEGG" id="mxa:MXAN_7062"/>
<dbReference type="eggNOG" id="COG0217">
    <property type="taxonomic scope" value="Bacteria"/>
</dbReference>
<dbReference type="HOGENOM" id="CLU_062974_3_0_7"/>
<dbReference type="OrthoDB" id="9781053at2"/>
<dbReference type="Proteomes" id="UP000002402">
    <property type="component" value="Chromosome"/>
</dbReference>
<dbReference type="GO" id="GO:0005829">
    <property type="term" value="C:cytosol"/>
    <property type="evidence" value="ECO:0007669"/>
    <property type="project" value="TreeGrafter"/>
</dbReference>
<dbReference type="GO" id="GO:0003677">
    <property type="term" value="F:DNA binding"/>
    <property type="evidence" value="ECO:0007669"/>
    <property type="project" value="UniProtKB-UniRule"/>
</dbReference>
<dbReference type="GO" id="GO:0006355">
    <property type="term" value="P:regulation of DNA-templated transcription"/>
    <property type="evidence" value="ECO:0007669"/>
    <property type="project" value="UniProtKB-UniRule"/>
</dbReference>
<dbReference type="FunFam" id="1.10.10.200:FF:000004">
    <property type="entry name" value="Probable transcriptional regulatory protein BSBG_02618"/>
    <property type="match status" value="1"/>
</dbReference>
<dbReference type="Gene3D" id="1.10.10.200">
    <property type="match status" value="1"/>
</dbReference>
<dbReference type="Gene3D" id="3.30.70.980">
    <property type="match status" value="2"/>
</dbReference>
<dbReference type="HAMAP" id="MF_00693">
    <property type="entry name" value="Transcrip_reg_TACO1"/>
    <property type="match status" value="1"/>
</dbReference>
<dbReference type="InterPro" id="IPR017856">
    <property type="entry name" value="Integrase-like_N"/>
</dbReference>
<dbReference type="InterPro" id="IPR048300">
    <property type="entry name" value="TACO1_YebC-like_2nd/3rd_dom"/>
</dbReference>
<dbReference type="InterPro" id="IPR049083">
    <property type="entry name" value="TACO1_YebC_N"/>
</dbReference>
<dbReference type="InterPro" id="IPR002876">
    <property type="entry name" value="Transcrip_reg_TACO1-like"/>
</dbReference>
<dbReference type="InterPro" id="IPR026564">
    <property type="entry name" value="Transcrip_reg_TACO1-like_dom3"/>
</dbReference>
<dbReference type="InterPro" id="IPR029072">
    <property type="entry name" value="YebC-like"/>
</dbReference>
<dbReference type="NCBIfam" id="NF009044">
    <property type="entry name" value="PRK12378.1"/>
    <property type="match status" value="1"/>
</dbReference>
<dbReference type="NCBIfam" id="TIGR01033">
    <property type="entry name" value="YebC/PmpR family DNA-binding transcriptional regulator"/>
    <property type="match status" value="1"/>
</dbReference>
<dbReference type="PANTHER" id="PTHR12532:SF6">
    <property type="entry name" value="TRANSCRIPTIONAL REGULATORY PROTEIN YEBC-RELATED"/>
    <property type="match status" value="1"/>
</dbReference>
<dbReference type="PANTHER" id="PTHR12532">
    <property type="entry name" value="TRANSLATIONAL ACTIVATOR OF CYTOCHROME C OXIDASE 1"/>
    <property type="match status" value="1"/>
</dbReference>
<dbReference type="Pfam" id="PF20772">
    <property type="entry name" value="TACO1_YebC_N"/>
    <property type="match status" value="1"/>
</dbReference>
<dbReference type="Pfam" id="PF01709">
    <property type="entry name" value="Transcrip_reg"/>
    <property type="match status" value="1"/>
</dbReference>
<dbReference type="SUPFAM" id="SSF75625">
    <property type="entry name" value="YebC-like"/>
    <property type="match status" value="1"/>
</dbReference>
<protein>
    <recommendedName>
        <fullName evidence="1">Probable transcriptional regulatory protein MXAN_7062</fullName>
    </recommendedName>
</protein>
<feature type="chain" id="PRO_0000257086" description="Probable transcriptional regulatory protein MXAN_7062">
    <location>
        <begin position="1"/>
        <end position="240"/>
    </location>
</feature>
<name>Y7062_MYXXD</name>
<organism>
    <name type="scientific">Myxococcus xanthus (strain DK1622)</name>
    <dbReference type="NCBI Taxonomy" id="246197"/>
    <lineage>
        <taxon>Bacteria</taxon>
        <taxon>Pseudomonadati</taxon>
        <taxon>Myxococcota</taxon>
        <taxon>Myxococcia</taxon>
        <taxon>Myxococcales</taxon>
        <taxon>Cystobacterineae</taxon>
        <taxon>Myxococcaceae</taxon>
        <taxon>Myxococcus</taxon>
    </lineage>
</organism>
<keyword id="KW-0963">Cytoplasm</keyword>
<keyword id="KW-0238">DNA-binding</keyword>
<keyword id="KW-1185">Reference proteome</keyword>
<keyword id="KW-0804">Transcription</keyword>
<keyword id="KW-0805">Transcription regulation</keyword>